<accession>P59945</accession>
<name>RSGA_MYCGA</name>
<comment type="function">
    <text evidence="1">One of several proteins that assist in the late maturation steps of the functional core of the 30S ribosomal subunit. Helps release RbfA from mature subunits. May play a role in the assembly of ribosomal proteins into the subunit. Circularly permuted GTPase that catalyzes slow GTP hydrolysis, GTPase activity is stimulated by the 30S ribosomal subunit.</text>
</comment>
<comment type="cofactor">
    <cofactor evidence="1">
        <name>Zn(2+)</name>
        <dbReference type="ChEBI" id="CHEBI:29105"/>
    </cofactor>
    <text evidence="1">Binds 1 zinc ion per subunit.</text>
</comment>
<comment type="subunit">
    <text evidence="1">Monomer. Associates with 30S ribosomal subunit, binds 16S rRNA.</text>
</comment>
<comment type="subcellular location">
    <subcellularLocation>
        <location evidence="1">Cytoplasm</location>
    </subcellularLocation>
</comment>
<comment type="similarity">
    <text evidence="1">Belongs to the TRAFAC class YlqF/YawG GTPase family. RsgA subfamily.</text>
</comment>
<organism>
    <name type="scientific">Mycoplasmoides gallisepticum (strain R(low / passage 15 / clone 2))</name>
    <name type="common">Mycoplasma gallisepticum</name>
    <dbReference type="NCBI Taxonomy" id="710127"/>
    <lineage>
        <taxon>Bacteria</taxon>
        <taxon>Bacillati</taxon>
        <taxon>Mycoplasmatota</taxon>
        <taxon>Mycoplasmoidales</taxon>
        <taxon>Mycoplasmoidaceae</taxon>
        <taxon>Mycoplasmoides</taxon>
    </lineage>
</organism>
<feature type="chain" id="PRO_0000171493" description="Small ribosomal subunit biogenesis GTPase RsgA">
    <location>
        <begin position="1"/>
        <end position="274"/>
    </location>
</feature>
<feature type="domain" description="CP-type G" evidence="2">
    <location>
        <begin position="58"/>
        <end position="215"/>
    </location>
</feature>
<feature type="binding site" evidence="1">
    <location>
        <begin position="108"/>
        <end position="111"/>
    </location>
    <ligand>
        <name>GTP</name>
        <dbReference type="ChEBI" id="CHEBI:37565"/>
    </ligand>
</feature>
<feature type="binding site" evidence="1">
    <location>
        <begin position="158"/>
        <end position="166"/>
    </location>
    <ligand>
        <name>GTP</name>
        <dbReference type="ChEBI" id="CHEBI:37565"/>
    </ligand>
</feature>
<feature type="binding site" evidence="1">
    <location>
        <position position="238"/>
    </location>
    <ligand>
        <name>Zn(2+)</name>
        <dbReference type="ChEBI" id="CHEBI:29105"/>
    </ligand>
</feature>
<feature type="binding site" evidence="1">
    <location>
        <position position="243"/>
    </location>
    <ligand>
        <name>Zn(2+)</name>
        <dbReference type="ChEBI" id="CHEBI:29105"/>
    </ligand>
</feature>
<feature type="binding site" evidence="1">
    <location>
        <position position="245"/>
    </location>
    <ligand>
        <name>Zn(2+)</name>
        <dbReference type="ChEBI" id="CHEBI:29105"/>
    </ligand>
</feature>
<feature type="binding site" evidence="1">
    <location>
        <position position="252"/>
    </location>
    <ligand>
        <name>Zn(2+)</name>
        <dbReference type="ChEBI" id="CHEBI:29105"/>
    </ligand>
</feature>
<evidence type="ECO:0000255" key="1">
    <source>
        <dbReference type="HAMAP-Rule" id="MF_01820"/>
    </source>
</evidence>
<evidence type="ECO:0000255" key="2">
    <source>
        <dbReference type="PROSITE-ProRule" id="PRU01058"/>
    </source>
</evidence>
<proteinExistence type="inferred from homology"/>
<gene>
    <name evidence="1" type="primary">rsgA</name>
    <name type="ordered locus">MYCGA6370</name>
    <name type="ORF">MGA_0458</name>
</gene>
<sequence>MIARILSINANDLFCEVNHELKKLHAPGRWKHQKINLAPNDLLELNDQGEIIKLIERKNYLNRPKVANLDHVVLVFSIKDPQLNLKQLFKFMVYFESQLGFKPLIVFSKLDLDHDQNEFKKIVEALEQINYQVFKLNEPDDFLRLKNLLFNKVTIFCGHSGVGKSTLLKRLDNSLDIWTQAVSAKLKRGKNTTTATKLYKFLDGYLVDSPGFSIYDLNLTKQQLSCGLIEFAQYQTKCKFNDCLHLENSADCYLKKKINSLIYQIYLSVIKSII</sequence>
<protein>
    <recommendedName>
        <fullName evidence="1">Small ribosomal subunit biogenesis GTPase RsgA</fullName>
        <ecNumber evidence="1">3.6.1.-</ecNumber>
    </recommendedName>
</protein>
<reference key="1">
    <citation type="journal article" date="2003" name="Microbiology">
        <title>The complete genome sequence of the avian pathogen Mycoplasma gallisepticum strain R(low).</title>
        <authorList>
            <person name="Papazisi L."/>
            <person name="Gorton T.S."/>
            <person name="Kutish G."/>
            <person name="Markham P.F."/>
            <person name="Browning G.F."/>
            <person name="Nguyen D.K."/>
            <person name="Swartzell S."/>
            <person name="Madan A."/>
            <person name="Mahairas G."/>
            <person name="Geary S.J."/>
        </authorList>
    </citation>
    <scope>NUCLEOTIDE SEQUENCE [LARGE SCALE GENOMIC DNA]</scope>
    <source>
        <strain>R(low / passage 15 / clone 2)</strain>
    </source>
</reference>
<dbReference type="EC" id="3.6.1.-" evidence="1"/>
<dbReference type="EMBL" id="AE015450">
    <property type="protein sequence ID" value="AAP56987.1"/>
    <property type="molecule type" value="Genomic_DNA"/>
</dbReference>
<dbReference type="RefSeq" id="WP_011113897.1">
    <property type="nucleotide sequence ID" value="NC_004829.2"/>
</dbReference>
<dbReference type="SMR" id="P59945"/>
<dbReference type="GeneID" id="93510474"/>
<dbReference type="KEGG" id="mga:MGA_0458"/>
<dbReference type="PATRIC" id="fig|233150.7.peg.714"/>
<dbReference type="HOGENOM" id="CLU_033617_2_1_14"/>
<dbReference type="OrthoDB" id="9809485at2"/>
<dbReference type="Proteomes" id="UP000001418">
    <property type="component" value="Chromosome"/>
</dbReference>
<dbReference type="GO" id="GO:0005737">
    <property type="term" value="C:cytoplasm"/>
    <property type="evidence" value="ECO:0007669"/>
    <property type="project" value="UniProtKB-SubCell"/>
</dbReference>
<dbReference type="GO" id="GO:0005525">
    <property type="term" value="F:GTP binding"/>
    <property type="evidence" value="ECO:0007669"/>
    <property type="project" value="UniProtKB-UniRule"/>
</dbReference>
<dbReference type="GO" id="GO:0003924">
    <property type="term" value="F:GTPase activity"/>
    <property type="evidence" value="ECO:0007669"/>
    <property type="project" value="UniProtKB-UniRule"/>
</dbReference>
<dbReference type="GO" id="GO:0046872">
    <property type="term" value="F:metal ion binding"/>
    <property type="evidence" value="ECO:0007669"/>
    <property type="project" value="UniProtKB-KW"/>
</dbReference>
<dbReference type="GO" id="GO:0019843">
    <property type="term" value="F:rRNA binding"/>
    <property type="evidence" value="ECO:0007669"/>
    <property type="project" value="UniProtKB-KW"/>
</dbReference>
<dbReference type="GO" id="GO:0042274">
    <property type="term" value="P:ribosomal small subunit biogenesis"/>
    <property type="evidence" value="ECO:0007669"/>
    <property type="project" value="UniProtKB-UniRule"/>
</dbReference>
<dbReference type="CDD" id="cd01854">
    <property type="entry name" value="YjeQ_EngC"/>
    <property type="match status" value="1"/>
</dbReference>
<dbReference type="Gene3D" id="3.40.50.300">
    <property type="entry name" value="P-loop containing nucleotide triphosphate hydrolases"/>
    <property type="match status" value="1"/>
</dbReference>
<dbReference type="Gene3D" id="1.10.40.50">
    <property type="entry name" value="Probable gtpase engc, domain 3"/>
    <property type="match status" value="1"/>
</dbReference>
<dbReference type="HAMAP" id="MF_01820">
    <property type="entry name" value="GTPase_RsgA"/>
    <property type="match status" value="1"/>
</dbReference>
<dbReference type="InterPro" id="IPR030378">
    <property type="entry name" value="G_CP_dom"/>
</dbReference>
<dbReference type="InterPro" id="IPR027417">
    <property type="entry name" value="P-loop_NTPase"/>
</dbReference>
<dbReference type="InterPro" id="IPR004881">
    <property type="entry name" value="Ribosome_biogen_GTPase_RsgA"/>
</dbReference>
<dbReference type="InterPro" id="IPR010914">
    <property type="entry name" value="RsgA_GTPase_dom"/>
</dbReference>
<dbReference type="NCBIfam" id="TIGR00157">
    <property type="entry name" value="ribosome small subunit-dependent GTPase A"/>
    <property type="match status" value="1"/>
</dbReference>
<dbReference type="PANTHER" id="PTHR32120">
    <property type="entry name" value="SMALL RIBOSOMAL SUBUNIT BIOGENESIS GTPASE RSGA"/>
    <property type="match status" value="1"/>
</dbReference>
<dbReference type="PANTHER" id="PTHR32120:SF11">
    <property type="entry name" value="SMALL RIBOSOMAL SUBUNIT BIOGENESIS GTPASE RSGA 1, MITOCHONDRIAL-RELATED"/>
    <property type="match status" value="1"/>
</dbReference>
<dbReference type="Pfam" id="PF03193">
    <property type="entry name" value="RsgA_GTPase"/>
    <property type="match status" value="1"/>
</dbReference>
<dbReference type="SUPFAM" id="SSF52540">
    <property type="entry name" value="P-loop containing nucleoside triphosphate hydrolases"/>
    <property type="match status" value="1"/>
</dbReference>
<dbReference type="PROSITE" id="PS50936">
    <property type="entry name" value="ENGC_GTPASE"/>
    <property type="match status" value="1"/>
</dbReference>
<dbReference type="PROSITE" id="PS51721">
    <property type="entry name" value="G_CP"/>
    <property type="match status" value="1"/>
</dbReference>
<keyword id="KW-0963">Cytoplasm</keyword>
<keyword id="KW-0342">GTP-binding</keyword>
<keyword id="KW-0378">Hydrolase</keyword>
<keyword id="KW-0479">Metal-binding</keyword>
<keyword id="KW-0547">Nucleotide-binding</keyword>
<keyword id="KW-1185">Reference proteome</keyword>
<keyword id="KW-0690">Ribosome biogenesis</keyword>
<keyword id="KW-0694">RNA-binding</keyword>
<keyword id="KW-0699">rRNA-binding</keyword>
<keyword id="KW-0862">Zinc</keyword>